<sequence length="352" mass="37781">MAGAITDQLRRYLHGRRRAAAHMGSDYDGLIADLEDFVLGGGKRLRPLFAYWGWHAVASREPDPDVLLLFSALELLHAWALVHDDLIDRSATRRGRPTAQLRYAALHRDRDWRGSPDQFGMSAAILLGDLAQVWADDIVSKVCQSALAPDAQRRVHRVWADIRNEVLGGQYLDIVAEASAAESIESAMNVATLKTACYTVSRPLQLGTAAAADRSDVAAIFEHFGADLGVAFQLRDDVLGVFGDPAVTGKPSGDDLKSGKRTVLVAEAVELADRSDPLAAKLLRTSIGTRLTDAQVRELRTVIEAVGARAAAESRIAALTQRALATLASAPINATAKAGLSELAMMAANRSA</sequence>
<evidence type="ECO:0000250" key="1">
    <source>
        <dbReference type="UniProtKB" id="Q12051"/>
    </source>
</evidence>
<evidence type="ECO:0000269" key="2">
    <source>
    </source>
</evidence>
<evidence type="ECO:0000305" key="3"/>
<evidence type="ECO:0000312" key="4">
    <source>
        <dbReference type="EMBL" id="CCP44950.1"/>
    </source>
</evidence>
<evidence type="ECO:0007829" key="5">
    <source>
        <dbReference type="PDB" id="8F8F"/>
    </source>
</evidence>
<feature type="chain" id="PRO_0000451295" description="(2E,6E)-farnesyl diphosphate synthase">
    <location>
        <begin position="1"/>
        <end position="352"/>
    </location>
</feature>
<feature type="short sequence motif" description="DDXXD motif" evidence="3">
    <location>
        <begin position="84"/>
        <end position="88"/>
    </location>
</feature>
<feature type="short sequence motif" description="DDXXD motif" evidence="3">
    <location>
        <begin position="236"/>
        <end position="240"/>
    </location>
</feature>
<feature type="binding site" evidence="1">
    <location>
        <position position="43"/>
    </location>
    <ligand>
        <name>isopentenyl diphosphate</name>
        <dbReference type="ChEBI" id="CHEBI:128769"/>
    </ligand>
</feature>
<feature type="binding site" evidence="1">
    <location>
        <position position="46"/>
    </location>
    <ligand>
        <name>isopentenyl diphosphate</name>
        <dbReference type="ChEBI" id="CHEBI:128769"/>
    </ligand>
</feature>
<feature type="binding site" evidence="1">
    <location>
        <position position="77"/>
    </location>
    <ligand>
        <name>isopentenyl diphosphate</name>
        <dbReference type="ChEBI" id="CHEBI:128769"/>
    </ligand>
</feature>
<feature type="binding site" evidence="1">
    <location>
        <position position="84"/>
    </location>
    <ligand>
        <name>Mg(2+)</name>
        <dbReference type="ChEBI" id="CHEBI:18420"/>
        <label>1</label>
    </ligand>
</feature>
<feature type="binding site" evidence="1">
    <location>
        <position position="84"/>
    </location>
    <ligand>
        <name>Mg(2+)</name>
        <dbReference type="ChEBI" id="CHEBI:18420"/>
        <label>2</label>
    </ligand>
</feature>
<feature type="binding site" evidence="1">
    <location>
        <position position="88"/>
    </location>
    <ligand>
        <name>Mg(2+)</name>
        <dbReference type="ChEBI" id="CHEBI:18420"/>
        <label>1</label>
    </ligand>
</feature>
<feature type="binding site" evidence="1">
    <location>
        <position position="88"/>
    </location>
    <ligand>
        <name>Mg(2+)</name>
        <dbReference type="ChEBI" id="CHEBI:18420"/>
        <label>2</label>
    </ligand>
</feature>
<feature type="binding site" evidence="1">
    <location>
        <position position="94"/>
    </location>
    <ligand>
        <name>isopentenyl diphosphate</name>
        <dbReference type="ChEBI" id="CHEBI:128769"/>
    </ligand>
</feature>
<feature type="helix" evidence="5">
    <location>
        <begin position="1"/>
        <end position="19"/>
    </location>
</feature>
<feature type="helix" evidence="5">
    <location>
        <begin position="20"/>
        <end position="23"/>
    </location>
</feature>
<feature type="helix" evidence="5">
    <location>
        <begin position="25"/>
        <end position="38"/>
    </location>
</feature>
<feature type="helix" evidence="5">
    <location>
        <begin position="45"/>
        <end position="57"/>
    </location>
</feature>
<feature type="helix" evidence="5">
    <location>
        <begin position="64"/>
        <end position="88"/>
    </location>
</feature>
<feature type="strand" evidence="5">
    <location>
        <begin position="91"/>
        <end position="93"/>
    </location>
</feature>
<feature type="helix" evidence="5">
    <location>
        <begin position="99"/>
        <end position="109"/>
    </location>
</feature>
<feature type="helix" evidence="5">
    <location>
        <begin position="116"/>
        <end position="146"/>
    </location>
</feature>
<feature type="helix" evidence="5">
    <location>
        <begin position="149"/>
        <end position="179"/>
    </location>
</feature>
<feature type="helix" evidence="5">
    <location>
        <begin position="184"/>
        <end position="194"/>
    </location>
</feature>
<feature type="helix" evidence="5">
    <location>
        <begin position="196"/>
        <end position="199"/>
    </location>
</feature>
<feature type="helix" evidence="5">
    <location>
        <begin position="201"/>
        <end position="211"/>
    </location>
</feature>
<feature type="helix" evidence="5">
    <location>
        <begin position="215"/>
        <end position="242"/>
    </location>
</feature>
<feature type="helix" evidence="5">
    <location>
        <begin position="245"/>
        <end position="248"/>
    </location>
</feature>
<feature type="helix" evidence="5">
    <location>
        <begin position="254"/>
        <end position="258"/>
    </location>
</feature>
<feature type="helix" evidence="5">
    <location>
        <begin position="263"/>
        <end position="275"/>
    </location>
</feature>
<feature type="helix" evidence="5">
    <location>
        <begin position="277"/>
        <end position="286"/>
    </location>
</feature>
<feature type="helix" evidence="5">
    <location>
        <begin position="293"/>
        <end position="305"/>
    </location>
</feature>
<feature type="helix" evidence="5">
    <location>
        <begin position="308"/>
        <end position="328"/>
    </location>
</feature>
<feature type="strand" evidence="5">
    <location>
        <begin position="330"/>
        <end position="332"/>
    </location>
</feature>
<feature type="helix" evidence="5">
    <location>
        <begin position="334"/>
        <end position="346"/>
    </location>
</feature>
<dbReference type="EC" id="2.5.1.10" evidence="2"/>
<dbReference type="EC" id="2.5.1.1" evidence="2"/>
<dbReference type="EMBL" id="AL123456">
    <property type="protein sequence ID" value="CCP44950.1"/>
    <property type="molecule type" value="Genomic_DNA"/>
</dbReference>
<dbReference type="RefSeq" id="NP_216689.1">
    <property type="nucleotide sequence ID" value="NC_000962.3"/>
</dbReference>
<dbReference type="RefSeq" id="WP_003411245.1">
    <property type="nucleotide sequence ID" value="NZ_NVQJ01000083.1"/>
</dbReference>
<dbReference type="PDB" id="8F8F">
    <property type="method" value="X-ray"/>
    <property type="resolution" value="2.00 A"/>
    <property type="chains" value="A/B=1-352"/>
</dbReference>
<dbReference type="PDB" id="8F8K">
    <property type="method" value="X-ray"/>
    <property type="resolution" value="2.20 A"/>
    <property type="chains" value="A=1-352"/>
</dbReference>
<dbReference type="PDB" id="8F8L">
    <property type="method" value="X-ray"/>
    <property type="resolution" value="2.20 A"/>
    <property type="chains" value="A=1-352"/>
</dbReference>
<dbReference type="PDBsum" id="8F8F"/>
<dbReference type="PDBsum" id="8F8K"/>
<dbReference type="PDBsum" id="8F8L"/>
<dbReference type="SMR" id="O53507"/>
<dbReference type="FunCoup" id="O53507">
    <property type="interactions" value="84"/>
</dbReference>
<dbReference type="STRING" id="83332.Rv2173"/>
<dbReference type="PaxDb" id="83332-Rv2173"/>
<dbReference type="DNASU" id="888334"/>
<dbReference type="GeneID" id="888334"/>
<dbReference type="KEGG" id="mtu:Rv2173"/>
<dbReference type="KEGG" id="mtv:RVBD_2173"/>
<dbReference type="PATRIC" id="fig|83332.111.peg.2419"/>
<dbReference type="TubercuList" id="Rv2173"/>
<dbReference type="eggNOG" id="COG0142">
    <property type="taxonomic scope" value="Bacteria"/>
</dbReference>
<dbReference type="InParanoid" id="O53507"/>
<dbReference type="OrthoDB" id="4497239at2"/>
<dbReference type="PhylomeDB" id="O53507"/>
<dbReference type="UniPathway" id="UPA00259">
    <property type="reaction ID" value="UER00368"/>
</dbReference>
<dbReference type="Proteomes" id="UP000001584">
    <property type="component" value="Chromosome"/>
</dbReference>
<dbReference type="GO" id="GO:0004337">
    <property type="term" value="F:(2E,6E)-farnesyl diphosphate synthase activity"/>
    <property type="evidence" value="ECO:0007669"/>
    <property type="project" value="UniProtKB-EC"/>
</dbReference>
<dbReference type="GO" id="GO:0004161">
    <property type="term" value="F:dimethylallyltranstransferase activity"/>
    <property type="evidence" value="ECO:0007669"/>
    <property type="project" value="UniProtKB-EC"/>
</dbReference>
<dbReference type="GO" id="GO:0046872">
    <property type="term" value="F:metal ion binding"/>
    <property type="evidence" value="ECO:0007669"/>
    <property type="project" value="UniProtKB-KW"/>
</dbReference>
<dbReference type="GO" id="GO:0004659">
    <property type="term" value="F:prenyltransferase activity"/>
    <property type="evidence" value="ECO:0000318"/>
    <property type="project" value="GO_Central"/>
</dbReference>
<dbReference type="GO" id="GO:0033384">
    <property type="term" value="P:geranyl diphosphate biosynthetic process"/>
    <property type="evidence" value="ECO:0007669"/>
    <property type="project" value="UniProtKB-UniPathway"/>
</dbReference>
<dbReference type="GO" id="GO:0008299">
    <property type="term" value="P:isoprenoid biosynthetic process"/>
    <property type="evidence" value="ECO:0000318"/>
    <property type="project" value="GO_Central"/>
</dbReference>
<dbReference type="CDD" id="cd00685">
    <property type="entry name" value="Trans_IPPS_HT"/>
    <property type="match status" value="1"/>
</dbReference>
<dbReference type="Gene3D" id="1.10.600.10">
    <property type="entry name" value="Farnesyl Diphosphate Synthase"/>
    <property type="match status" value="1"/>
</dbReference>
<dbReference type="InterPro" id="IPR054885">
    <property type="entry name" value="FPP_synthase"/>
</dbReference>
<dbReference type="InterPro" id="IPR008949">
    <property type="entry name" value="Isoprenoid_synthase_dom_sf"/>
</dbReference>
<dbReference type="InterPro" id="IPR000092">
    <property type="entry name" value="Polyprenyl_synt"/>
</dbReference>
<dbReference type="InterPro" id="IPR033749">
    <property type="entry name" value="Polyprenyl_synt_CS"/>
</dbReference>
<dbReference type="NCBIfam" id="NF042416">
    <property type="entry name" value="GFPPS_Mycobact"/>
    <property type="match status" value="1"/>
</dbReference>
<dbReference type="PANTHER" id="PTHR12001">
    <property type="entry name" value="GERANYLGERANYL PYROPHOSPHATE SYNTHASE"/>
    <property type="match status" value="1"/>
</dbReference>
<dbReference type="PANTHER" id="PTHR12001:SF85">
    <property type="entry name" value="SHORT CHAIN ISOPRENYL DIPHOSPHATE SYNTHASE"/>
    <property type="match status" value="1"/>
</dbReference>
<dbReference type="Pfam" id="PF00348">
    <property type="entry name" value="polyprenyl_synt"/>
    <property type="match status" value="1"/>
</dbReference>
<dbReference type="SFLD" id="SFLDS00005">
    <property type="entry name" value="Isoprenoid_Synthase_Type_I"/>
    <property type="match status" value="1"/>
</dbReference>
<dbReference type="SFLD" id="SFLDG01017">
    <property type="entry name" value="Polyprenyl_Transferase_Like"/>
    <property type="match status" value="1"/>
</dbReference>
<dbReference type="SUPFAM" id="SSF48576">
    <property type="entry name" value="Terpenoid synthases"/>
    <property type="match status" value="1"/>
</dbReference>
<dbReference type="PROSITE" id="PS00723">
    <property type="entry name" value="POLYPRENYL_SYNTHASE_1"/>
    <property type="match status" value="1"/>
</dbReference>
<dbReference type="PROSITE" id="PS00444">
    <property type="entry name" value="POLYPRENYL_SYNTHASE_2"/>
    <property type="match status" value="1"/>
</dbReference>
<keyword id="KW-0002">3D-structure</keyword>
<keyword id="KW-0444">Lipid biosynthesis</keyword>
<keyword id="KW-0443">Lipid metabolism</keyword>
<keyword id="KW-0460">Magnesium</keyword>
<keyword id="KW-0479">Metal-binding</keyword>
<keyword id="KW-1185">Reference proteome</keyword>
<keyword id="KW-0808">Transferase</keyword>
<organism>
    <name type="scientific">Mycobacterium tuberculosis (strain ATCC 25618 / H37Rv)</name>
    <dbReference type="NCBI Taxonomy" id="83332"/>
    <lineage>
        <taxon>Bacteria</taxon>
        <taxon>Bacillati</taxon>
        <taxon>Actinomycetota</taxon>
        <taxon>Actinomycetes</taxon>
        <taxon>Mycobacteriales</taxon>
        <taxon>Mycobacteriaceae</taxon>
        <taxon>Mycobacterium</taxon>
        <taxon>Mycobacterium tuberculosis complex</taxon>
    </lineage>
</organism>
<gene>
    <name evidence="4" type="primary">idsA2</name>
    <name evidence="4" type="ordered locus">Rv2173</name>
</gene>
<reference key="1">
    <citation type="journal article" date="1998" name="Nature">
        <title>Deciphering the biology of Mycobacterium tuberculosis from the complete genome sequence.</title>
        <authorList>
            <person name="Cole S.T."/>
            <person name="Brosch R."/>
            <person name="Parkhill J."/>
            <person name="Garnier T."/>
            <person name="Churcher C.M."/>
            <person name="Harris D.E."/>
            <person name="Gordon S.V."/>
            <person name="Eiglmeier K."/>
            <person name="Gas S."/>
            <person name="Barry C.E. III"/>
            <person name="Tekaia F."/>
            <person name="Badcock K."/>
            <person name="Basham D."/>
            <person name="Brown D."/>
            <person name="Chillingworth T."/>
            <person name="Connor R."/>
            <person name="Davies R.M."/>
            <person name="Devlin K."/>
            <person name="Feltwell T."/>
            <person name="Gentles S."/>
            <person name="Hamlin N."/>
            <person name="Holroyd S."/>
            <person name="Hornsby T."/>
            <person name="Jagels K."/>
            <person name="Krogh A."/>
            <person name="McLean J."/>
            <person name="Moule S."/>
            <person name="Murphy L.D."/>
            <person name="Oliver S."/>
            <person name="Osborne J."/>
            <person name="Quail M.A."/>
            <person name="Rajandream M.A."/>
            <person name="Rogers J."/>
            <person name="Rutter S."/>
            <person name="Seeger K."/>
            <person name="Skelton S."/>
            <person name="Squares S."/>
            <person name="Squares R."/>
            <person name="Sulston J.E."/>
            <person name="Taylor K."/>
            <person name="Whitehead S."/>
            <person name="Barrell B.G."/>
        </authorList>
    </citation>
    <scope>NUCLEOTIDE SEQUENCE [LARGE SCALE GENOMIC DNA]</scope>
    <source>
        <strain>ATCC 25618 / H37Rv</strain>
    </source>
</reference>
<reference key="2">
    <citation type="journal article" date="2011" name="Mol. Cell. Proteomics">
        <title>Proteogenomic analysis of Mycobacterium tuberculosis by high resolution mass spectrometry.</title>
        <authorList>
            <person name="Kelkar D.S."/>
            <person name="Kumar D."/>
            <person name="Kumar P."/>
            <person name="Balakrishnan L."/>
            <person name="Muthusamy B."/>
            <person name="Yadav A.K."/>
            <person name="Shrivastava P."/>
            <person name="Marimuthu A."/>
            <person name="Anand S."/>
            <person name="Sundaram H."/>
            <person name="Kingsbury R."/>
            <person name="Harsha H.C."/>
            <person name="Nair B."/>
            <person name="Prasad T.S."/>
            <person name="Chauhan D.S."/>
            <person name="Katoch K."/>
            <person name="Katoch V.M."/>
            <person name="Kumar P."/>
            <person name="Chaerkady R."/>
            <person name="Ramachandran S."/>
            <person name="Dash D."/>
            <person name="Pandey A."/>
        </authorList>
    </citation>
    <scope>IDENTIFICATION BY MASS SPECTROMETRY [LARGE SCALE ANALYSIS]</scope>
    <source>
        <strain>ATCC 25618 / H37Rv</strain>
    </source>
</reference>
<reference key="3">
    <citation type="journal article" date="2020" name="ChemBioChem">
        <title>Insight into isoprenoid biosynthesis by functional analysis of isoprenyl diphosphate synthases from Mycobacterium vanbaalenii and Mycobacterium tuberculosis.</title>
        <authorList>
            <person name="Abe T."/>
            <person name="Ozaki S."/>
            <person name="Ueda D."/>
            <person name="Sato T."/>
        </authorList>
    </citation>
    <scope>FUNCTION</scope>
    <scope>CATALYTIC ACTIVITY</scope>
    <scope>COFACTOR</scope>
    <scope>PATHWAY</scope>
</reference>
<comment type="function">
    <text evidence="2">Catalyzes the sequential condensations of isopentenyl pyrophosphate (IPP) with dimethylallyl diphosphate (DMAPP) to yield geranyl diphosphate (GPP) and with GPP to yield (2E,6E)-farnesyl diphosphate (E,E-FPP).</text>
</comment>
<comment type="catalytic activity">
    <reaction evidence="2">
        <text>isopentenyl diphosphate + dimethylallyl diphosphate = (2E)-geranyl diphosphate + diphosphate</text>
        <dbReference type="Rhea" id="RHEA:22408"/>
        <dbReference type="ChEBI" id="CHEBI:33019"/>
        <dbReference type="ChEBI" id="CHEBI:57623"/>
        <dbReference type="ChEBI" id="CHEBI:58057"/>
        <dbReference type="ChEBI" id="CHEBI:128769"/>
        <dbReference type="EC" id="2.5.1.1"/>
    </reaction>
    <physiologicalReaction direction="left-to-right" evidence="2">
        <dbReference type="Rhea" id="RHEA:22409"/>
    </physiologicalReaction>
</comment>
<comment type="catalytic activity">
    <reaction evidence="2">
        <text>isopentenyl diphosphate + (2E)-geranyl diphosphate = (2E,6E)-farnesyl diphosphate + diphosphate</text>
        <dbReference type="Rhea" id="RHEA:19361"/>
        <dbReference type="ChEBI" id="CHEBI:33019"/>
        <dbReference type="ChEBI" id="CHEBI:58057"/>
        <dbReference type="ChEBI" id="CHEBI:128769"/>
        <dbReference type="ChEBI" id="CHEBI:175763"/>
        <dbReference type="EC" id="2.5.1.10"/>
    </reaction>
    <physiologicalReaction direction="left-to-right" evidence="2">
        <dbReference type="Rhea" id="RHEA:19362"/>
    </physiologicalReaction>
</comment>
<comment type="cofactor">
    <cofactor evidence="2">
        <name>Mg(2+)</name>
        <dbReference type="ChEBI" id="CHEBI:18420"/>
    </cofactor>
    <text evidence="1">Binds 2 Mg(2+) ions per subunit.</text>
</comment>
<comment type="pathway">
    <text evidence="2">Isoprenoid biosynthesis; geranyl diphosphate biosynthesis; geranyl diphosphate from dimethylallyl diphosphate and isopentenyl diphosphate: step 1/1.</text>
</comment>
<comment type="pathway">
    <text evidence="2">Isoprenoid biosynthesis; farnesyl diphosphate biosynthesis; farnesyl diphosphate from geranyl diphosphate and isopentenyl diphosphate.</text>
</comment>
<comment type="domain">
    <text evidence="3">Contains two aspartate-rich DDxxD motifs, designated as FARM (the first aspartate-rich motif) and SARM (the second aspartate-rich motif).</text>
</comment>
<comment type="similarity">
    <text evidence="3">Belongs to the FPP/GGPP synthase family.</text>
</comment>
<name>GFPPS_MYCTU</name>
<proteinExistence type="evidence at protein level"/>
<accession>O53507</accession>
<accession>F2GJZ9</accession>
<accession>I6X3H6</accession>
<accession>Q7D7F1</accession>
<protein>
    <recommendedName>
        <fullName evidence="3">(2E,6E)-farnesyl diphosphate synthase</fullName>
        <shortName evidence="3">E,E-FPP synthase</shortName>
        <shortName evidence="3">FPP synthase</shortName>
        <ecNumber evidence="2">2.5.1.10</ecNumber>
    </recommendedName>
    <alternativeName>
        <fullName evidence="3">Dimethylallyltranstransferase</fullName>
        <ecNumber evidence="2">2.5.1.1</ecNumber>
    </alternativeName>
    <alternativeName>
        <fullName evidence="3">Geranyl diphosphate synthase</fullName>
        <shortName evidence="3">GPP synthase</shortName>
    </alternativeName>
</protein>